<proteinExistence type="evidence at transcript level"/>
<comment type="subcellular location">
    <subcellularLocation>
        <location evidence="1">Secreted</location>
    </subcellularLocation>
</comment>
<comment type="tissue specificity">
    <text evidence="4">Expressed in flower buds, but not in stems, roots or rosette leaves.</text>
</comment>
<comment type="similarity">
    <text evidence="5">Belongs to the DEFL family.</text>
</comment>
<sequence>MKKIFQLSFTVFIIFISLVLGVVGNVQQKRSNRCIDFPVNPKTGLCVLKDCESVCKKTSKGLEGICWKFNAKGKDPKQCKCCGLWPPLY</sequence>
<gene>
    <name type="primary">LCR1</name>
    <name type="ordered locus">At5g48543</name>
    <name type="ORF">MJE7</name>
</gene>
<feature type="signal peptide" evidence="2">
    <location>
        <begin position="1"/>
        <end position="24"/>
    </location>
</feature>
<feature type="chain" id="PRO_0000017244" description="Defensin-like protein 147">
    <location>
        <begin position="25"/>
        <end position="89"/>
    </location>
</feature>
<feature type="disulfide bond" evidence="1">
    <location>
        <begin position="34"/>
        <end position="82"/>
    </location>
</feature>
<feature type="disulfide bond" evidence="1">
    <location>
        <begin position="46"/>
        <end position="66"/>
    </location>
</feature>
<feature type="disulfide bond" evidence="1">
    <location>
        <begin position="51"/>
        <end position="79"/>
    </location>
</feature>
<feature type="disulfide bond" evidence="1">
    <location>
        <begin position="55"/>
        <end position="81"/>
    </location>
</feature>
<keyword id="KW-0929">Antimicrobial</keyword>
<keyword id="KW-1015">Disulfide bond</keyword>
<keyword id="KW-0295">Fungicide</keyword>
<keyword id="KW-0611">Plant defense</keyword>
<keyword id="KW-1185">Reference proteome</keyword>
<keyword id="KW-0964">Secreted</keyword>
<keyword id="KW-0732">Signal</keyword>
<evidence type="ECO:0000250" key="1"/>
<evidence type="ECO:0000255" key="2"/>
<evidence type="ECO:0000269" key="3">
    <source>
    </source>
</evidence>
<evidence type="ECO:0000269" key="4">
    <source>
    </source>
</evidence>
<evidence type="ECO:0000305" key="5"/>
<accession>P82716</accession>
<name>DF147_ARATH</name>
<dbReference type="EMBL" id="AB020745">
    <property type="status" value="NOT_ANNOTATED_CDS"/>
    <property type="molecule type" value="Genomic_DNA"/>
</dbReference>
<dbReference type="EMBL" id="CP002688">
    <property type="protein sequence ID" value="AED95684.1"/>
    <property type="molecule type" value="Genomic_DNA"/>
</dbReference>
<dbReference type="RefSeq" id="NP_001032034.1">
    <property type="nucleotide sequence ID" value="NM_001036957.2"/>
</dbReference>
<dbReference type="SMR" id="P82716"/>
<dbReference type="STRING" id="3702.P82716"/>
<dbReference type="PaxDb" id="3702-AT5G48543.1"/>
<dbReference type="ProteomicsDB" id="224001"/>
<dbReference type="EnsemblPlants" id="AT5G48543.1">
    <property type="protein sequence ID" value="AT5G48543.1"/>
    <property type="gene ID" value="AT5G48543"/>
</dbReference>
<dbReference type="GeneID" id="3771464"/>
<dbReference type="Gramene" id="AT5G48543.1">
    <property type="protein sequence ID" value="AT5G48543.1"/>
    <property type="gene ID" value="AT5G48543"/>
</dbReference>
<dbReference type="KEGG" id="ath:AT5G48543"/>
<dbReference type="Araport" id="AT5G48543"/>
<dbReference type="TAIR" id="AT5G48543">
    <property type="gene designation" value="LCR1"/>
</dbReference>
<dbReference type="HOGENOM" id="CLU_182511_0_0_1"/>
<dbReference type="InParanoid" id="P82716"/>
<dbReference type="PhylomeDB" id="P82716"/>
<dbReference type="PRO" id="PR:P82716"/>
<dbReference type="Proteomes" id="UP000006548">
    <property type="component" value="Chromosome 5"/>
</dbReference>
<dbReference type="ExpressionAtlas" id="P82716">
    <property type="expression patterns" value="baseline"/>
</dbReference>
<dbReference type="GO" id="GO:0005576">
    <property type="term" value="C:extracellular region"/>
    <property type="evidence" value="ECO:0007669"/>
    <property type="project" value="UniProtKB-SubCell"/>
</dbReference>
<dbReference type="GO" id="GO:0050832">
    <property type="term" value="P:defense response to fungus"/>
    <property type="evidence" value="ECO:0007669"/>
    <property type="project" value="UniProtKB-KW"/>
</dbReference>
<dbReference type="GO" id="GO:0031640">
    <property type="term" value="P:killing of cells of another organism"/>
    <property type="evidence" value="ECO:0007669"/>
    <property type="project" value="UniProtKB-KW"/>
</dbReference>
<dbReference type="InterPro" id="IPR010851">
    <property type="entry name" value="DEFL"/>
</dbReference>
<dbReference type="PANTHER" id="PTHR34783">
    <property type="entry name" value="DEFENSIN-LIKE PROTEIN 144-RELATED"/>
    <property type="match status" value="1"/>
</dbReference>
<dbReference type="PANTHER" id="PTHR34783:SF1">
    <property type="entry name" value="DEFENSIN-LIKE PROTEIN 144-RELATED"/>
    <property type="match status" value="1"/>
</dbReference>
<dbReference type="Pfam" id="PF07333">
    <property type="entry name" value="SLR1-BP"/>
    <property type="match status" value="1"/>
</dbReference>
<organism evidence="5">
    <name type="scientific">Arabidopsis thaliana</name>
    <name type="common">Mouse-ear cress</name>
    <dbReference type="NCBI Taxonomy" id="3702"/>
    <lineage>
        <taxon>Eukaryota</taxon>
        <taxon>Viridiplantae</taxon>
        <taxon>Streptophyta</taxon>
        <taxon>Embryophyta</taxon>
        <taxon>Tracheophyta</taxon>
        <taxon>Spermatophyta</taxon>
        <taxon>Magnoliopsida</taxon>
        <taxon>eudicotyledons</taxon>
        <taxon>Gunneridae</taxon>
        <taxon>Pentapetalae</taxon>
        <taxon>rosids</taxon>
        <taxon>malvids</taxon>
        <taxon>Brassicales</taxon>
        <taxon>Brassicaceae</taxon>
        <taxon>Camelineae</taxon>
        <taxon>Arabidopsis</taxon>
    </lineage>
</organism>
<reference evidence="5" key="1">
    <citation type="journal article" date="2000" name="DNA Res.">
        <title>Structural analysis of Arabidopsis thaliana chromosome 5. X. Sequence features of the regions of 3,076,755 bp covered by sixty P1 and TAC clones.</title>
        <authorList>
            <person name="Sato S."/>
            <person name="Nakamura Y."/>
            <person name="Kaneko T."/>
            <person name="Katoh T."/>
            <person name="Asamizu E."/>
            <person name="Kotani H."/>
            <person name="Tabata S."/>
        </authorList>
    </citation>
    <scope>NUCLEOTIDE SEQUENCE [LARGE SCALE GENOMIC DNA]</scope>
    <source>
        <strain evidence="3">cv. Columbia</strain>
    </source>
</reference>
<reference key="2">
    <citation type="journal article" date="2017" name="Plant J.">
        <title>Araport11: a complete reannotation of the Arabidopsis thaliana reference genome.</title>
        <authorList>
            <person name="Cheng C.Y."/>
            <person name="Krishnakumar V."/>
            <person name="Chan A.P."/>
            <person name="Thibaud-Nissen F."/>
            <person name="Schobel S."/>
            <person name="Town C.D."/>
        </authorList>
    </citation>
    <scope>GENOME REANNOTATION</scope>
    <source>
        <strain>cv. Columbia</strain>
    </source>
</reference>
<reference evidence="5" key="3">
    <citation type="journal article" date="2001" name="Plant Mol. Biol.">
        <title>Two large Arabidopsis thaliana gene families are homologous to the Brassica gene superfamily that encodes pollen coat proteins and the male component of the self-incompatibility response.</title>
        <authorList>
            <person name="Vanoosthuyse V."/>
            <person name="Miege C."/>
            <person name="Dumas C."/>
            <person name="Cock J.M."/>
        </authorList>
    </citation>
    <scope>IDENTIFICATION</scope>
    <scope>TISSUE SPECIFICITY</scope>
</reference>
<reference key="4">
    <citation type="journal article" date="2005" name="Plant Physiol.">
        <title>Genome organization of more than 300 defensin-like genes in Arabidopsis.</title>
        <authorList>
            <person name="Silverstein K.A.T."/>
            <person name="Graham M.A."/>
            <person name="Paape T.D."/>
            <person name="VandenBosch K.A."/>
        </authorList>
    </citation>
    <scope>GENE FAMILY</scope>
</reference>
<protein>
    <recommendedName>
        <fullName>Defensin-like protein 147</fullName>
    </recommendedName>
    <alternativeName>
        <fullName>Low-molecular-weight cysteine-rich protein 1</fullName>
        <shortName>Protein LCR1</shortName>
    </alternativeName>
</protein>